<protein>
    <recommendedName>
        <fullName evidence="6">Centrosomal protein of 55 kDa</fullName>
        <shortName>Cep55</shortName>
    </recommendedName>
</protein>
<comment type="function">
    <text evidence="2">Plays a role in mitotic exit and cytokinesis. Recruits PDCD6IP and TSG101 to midbody during cytokinesis. Required for successful completion of cytokinesis. Not required for microtubule nucleation. Plays a role in the development of the brain and kidney.</text>
</comment>
<comment type="subunit">
    <text evidence="2">Homodimer. Interacts (phosphorylated on Ser-423 and Ser-426) with PLK1; the interaction is indirect via the MTMR3:MTMR4 heterooligomer, occurs during early mitosis, regulates the phosphorylation of CEP55 by PLK1 and its recruitment to the midbody where it can mediate cell abscission. Interacts with AKAP9/CG-NAP; the interaction occurs in interphase and is lost upon mitotic entry. Interacts with PCNT/Kendrin; the interaction occurs in interphase and is lost upon mitotic entry. Directly interacts with PDCD6IP; this interaction is required for PDCD6IP targeting to the midbody; CEP55 binds PDCD6IP in a 2:1 stoichiometry; PDCD6IP competes with TSG101 for the same binding site. Interacts with TSG101; TSG101 competes with PDCD6IP for the same binding site; interaction is required for cytokinesis. Interacts with MVB12A, VPS37B, VPS37C and VPS28 (By similarity).</text>
</comment>
<comment type="subcellular location">
    <subcellularLocation>
        <location evidence="2">Cytoplasm</location>
    </subcellularLocation>
    <subcellularLocation>
        <location evidence="2">Cytoplasm</location>
        <location evidence="2">Cytoskeleton</location>
        <location evidence="2">Microtubule organizing center</location>
        <location evidence="2">Centrosome</location>
        <location evidence="2">Centriole</location>
    </subcellularLocation>
    <subcellularLocation>
        <location evidence="2">Cytoplasm</location>
        <location evidence="2">Cytoskeleton</location>
        <location evidence="2">Microtubule organizing center</location>
        <location evidence="2">Centrosome</location>
    </subcellularLocation>
    <subcellularLocation>
        <location evidence="2">Cleavage furrow</location>
    </subcellularLocation>
    <subcellularLocation>
        <location evidence="2">Midbody</location>
        <location evidence="2">Midbody ring</location>
    </subcellularLocation>
    <text evidence="2">Present at the centrosomes at interphase. A small portion is associated preferentially with the mother centriole, whereas the majority localizes to the pericentriolar material. During mitosis, loses affinity for the centrosome at the onset of prophase and diffuses throughout the cell. This dissociation from the centrosome is phosphorylation-dependent. May remain localized at the centrosome during mitosis in certain cell types. Appears at the cleavage furrow in late anaphase and in the midbody in cytokinesis.</text>
</comment>
<comment type="PTM">
    <text evidence="1">There is a hierachy of phosphorylation, where both Ser-423 and Ser-426 are phosphorylated at the onset of mitosis, prior to Ser-434. Phosphorylation at Ser-423 and Ser-426 is required for dissociation from the centrosome at the G2/M boundary. Phosphorylation at the 3 sites, Ser-423, Ser-426 and Ser-434, is required for protein function at the final stages of cell division to complete cytokinesis successfully (By similarity).</text>
</comment>
<reference key="1">
    <citation type="journal article" date="2004" name="Genome Res.">
        <title>The status, quality, and expansion of the NIH full-length cDNA project: the Mammalian Gene Collection (MGC).</title>
        <authorList>
            <consortium name="The MGC Project Team"/>
        </authorList>
    </citation>
    <scope>NUCLEOTIDE SEQUENCE [LARGE SCALE MRNA]</scope>
    <source>
        <tissue>Testis</tissue>
    </source>
</reference>
<reference key="2">
    <citation type="journal article" date="2012" name="Nat. Commun.">
        <title>Quantitative maps of protein phosphorylation sites across 14 different rat organs and tissues.</title>
        <authorList>
            <person name="Lundby A."/>
            <person name="Secher A."/>
            <person name="Lage K."/>
            <person name="Nordsborg N.B."/>
            <person name="Dmytriyev A."/>
            <person name="Lundby C."/>
            <person name="Olsen J.V."/>
        </authorList>
    </citation>
    <scope>PHOSPHORYLATION [LARGE SCALE ANALYSIS] AT SER-99</scope>
    <scope>IDENTIFICATION BY MASS SPECTROMETRY [LARGE SCALE ANALYSIS]</scope>
</reference>
<keyword id="KW-0131">Cell cycle</keyword>
<keyword id="KW-0132">Cell division</keyword>
<keyword id="KW-0175">Coiled coil</keyword>
<keyword id="KW-0963">Cytoplasm</keyword>
<keyword id="KW-0206">Cytoskeleton</keyword>
<keyword id="KW-0498">Mitosis</keyword>
<keyword id="KW-0597">Phosphoprotein</keyword>
<keyword id="KW-1185">Reference proteome</keyword>
<accession>Q4V7C8</accession>
<organism>
    <name type="scientific">Rattus norvegicus</name>
    <name type="common">Rat</name>
    <dbReference type="NCBI Taxonomy" id="10116"/>
    <lineage>
        <taxon>Eukaryota</taxon>
        <taxon>Metazoa</taxon>
        <taxon>Chordata</taxon>
        <taxon>Craniata</taxon>
        <taxon>Vertebrata</taxon>
        <taxon>Euteleostomi</taxon>
        <taxon>Mammalia</taxon>
        <taxon>Eutheria</taxon>
        <taxon>Euarchontoglires</taxon>
        <taxon>Glires</taxon>
        <taxon>Rodentia</taxon>
        <taxon>Myomorpha</taxon>
        <taxon>Muroidea</taxon>
        <taxon>Muridae</taxon>
        <taxon>Murinae</taxon>
        <taxon>Rattus</taxon>
    </lineage>
</organism>
<sequence>MSSRSPKDLIKSKWGSRPSSSKSDTALEKFKGEIAAFKTSLDEITNGKGKVANKDRSKLLEKIQVLEAEREKNVYYLMEKDKEIQRLKDHLRSRYSSSSLLEQLEEKTKECEKKQQLLESLSRETDILKKQLSATTKRLSELESKASTLHLSQSVPANCFNSSMNSIHEKEMQLKDALEKNQQWLVYDQQREAYVKGLLAKIFELEKRTETAAASLPQQMKKTESEGYLQEEKQKYDHLLENAKKDLEVERQTVTQLRLELDEFRRKYEETQKEVEDLNQLLSSQRKADIQHLEEDKHKTEKIQKLREESSVFKGKLEEERKKSEELLSQVRILYDSLLKHQEEQSRVALLERQMQACTLDFENEKLDRQNMQHQLYVILKELRKAKSQITQLESLKQLHGFTFTEQPFPLQGEPENRVKATSPKSPTAVLNESLVECPKCSVQYPATEHRDLLVHVEYCMK</sequence>
<dbReference type="EMBL" id="BC098013">
    <property type="protein sequence ID" value="AAH98013.1"/>
    <property type="molecule type" value="mRNA"/>
</dbReference>
<dbReference type="RefSeq" id="NP_001020817.1">
    <property type="nucleotide sequence ID" value="NM_001025646.1"/>
</dbReference>
<dbReference type="RefSeq" id="XP_006231380.1">
    <property type="nucleotide sequence ID" value="XM_006231318.5"/>
</dbReference>
<dbReference type="RefSeq" id="XP_006231381.1">
    <property type="nucleotide sequence ID" value="XM_006231319.4"/>
</dbReference>
<dbReference type="RefSeq" id="XP_006231382.1">
    <property type="nucleotide sequence ID" value="XM_006231320.2"/>
</dbReference>
<dbReference type="SMR" id="Q4V7C8"/>
<dbReference type="FunCoup" id="Q4V7C8">
    <property type="interactions" value="542"/>
</dbReference>
<dbReference type="STRING" id="10116.ENSRNOP00000022133"/>
<dbReference type="iPTMnet" id="Q4V7C8"/>
<dbReference type="PhosphoSitePlus" id="Q4V7C8"/>
<dbReference type="PaxDb" id="10116-ENSRNOP00000022133"/>
<dbReference type="Ensembl" id="ENSRNOT00000022133.6">
    <property type="protein sequence ID" value="ENSRNOP00000022133.3"/>
    <property type="gene ID" value="ENSRNOG00000016377.6"/>
</dbReference>
<dbReference type="GeneID" id="294074"/>
<dbReference type="KEGG" id="rno:294074"/>
<dbReference type="UCSC" id="RGD:1305340">
    <property type="organism name" value="rat"/>
</dbReference>
<dbReference type="AGR" id="RGD:1305340"/>
<dbReference type="CTD" id="55165"/>
<dbReference type="RGD" id="1305340">
    <property type="gene designation" value="Cep55"/>
</dbReference>
<dbReference type="eggNOG" id="ENOG502QTDI">
    <property type="taxonomic scope" value="Eukaryota"/>
</dbReference>
<dbReference type="GeneTree" id="ENSGT00510000047961"/>
<dbReference type="HOGENOM" id="CLU_047132_0_0_1"/>
<dbReference type="InParanoid" id="Q4V7C8"/>
<dbReference type="OMA" id="AVMAKCS"/>
<dbReference type="OrthoDB" id="73982at9989"/>
<dbReference type="PhylomeDB" id="Q4V7C8"/>
<dbReference type="TreeFam" id="TF331107"/>
<dbReference type="PRO" id="PR:Q4V7C8"/>
<dbReference type="Proteomes" id="UP000002494">
    <property type="component" value="Chromosome 1"/>
</dbReference>
<dbReference type="Bgee" id="ENSRNOG00000016377">
    <property type="expression patterns" value="Expressed in thymus and 17 other cell types or tissues"/>
</dbReference>
<dbReference type="GO" id="GO:0005814">
    <property type="term" value="C:centriole"/>
    <property type="evidence" value="ECO:0007669"/>
    <property type="project" value="UniProtKB-SubCell"/>
</dbReference>
<dbReference type="GO" id="GO:0005813">
    <property type="term" value="C:centrosome"/>
    <property type="evidence" value="ECO:0000266"/>
    <property type="project" value="RGD"/>
</dbReference>
<dbReference type="GO" id="GO:0032154">
    <property type="term" value="C:cleavage furrow"/>
    <property type="evidence" value="ECO:0007669"/>
    <property type="project" value="UniProtKB-SubCell"/>
</dbReference>
<dbReference type="GO" id="GO:0005737">
    <property type="term" value="C:cytoplasm"/>
    <property type="evidence" value="ECO:0007669"/>
    <property type="project" value="UniProtKB-SubCell"/>
</dbReference>
<dbReference type="GO" id="GO:0090543">
    <property type="term" value="C:Flemming body"/>
    <property type="evidence" value="ECO:0000250"/>
    <property type="project" value="UniProtKB"/>
</dbReference>
<dbReference type="GO" id="GO:0045171">
    <property type="term" value="C:intercellular bridge"/>
    <property type="evidence" value="ECO:0000266"/>
    <property type="project" value="RGD"/>
</dbReference>
<dbReference type="GO" id="GO:0030496">
    <property type="term" value="C:midbody"/>
    <property type="evidence" value="ECO:0000250"/>
    <property type="project" value="UniProtKB"/>
</dbReference>
<dbReference type="GO" id="GO:0042802">
    <property type="term" value="F:identical protein binding"/>
    <property type="evidence" value="ECO:0000266"/>
    <property type="project" value="RGD"/>
</dbReference>
<dbReference type="GO" id="GO:1904888">
    <property type="term" value="P:cranial skeletal system development"/>
    <property type="evidence" value="ECO:0000250"/>
    <property type="project" value="UniProtKB"/>
</dbReference>
<dbReference type="GO" id="GO:0045184">
    <property type="term" value="P:establishment of protein localization"/>
    <property type="evidence" value="ECO:0000266"/>
    <property type="project" value="RGD"/>
</dbReference>
<dbReference type="GO" id="GO:0061952">
    <property type="term" value="P:midbody abscission"/>
    <property type="evidence" value="ECO:0000266"/>
    <property type="project" value="RGD"/>
</dbReference>
<dbReference type="GO" id="GO:0000281">
    <property type="term" value="P:mitotic cytokinesis"/>
    <property type="evidence" value="ECO:0000266"/>
    <property type="project" value="RGD"/>
</dbReference>
<dbReference type="GO" id="GO:0051896">
    <property type="term" value="P:regulation of phosphatidylinositol 3-kinase/protein kinase B signal transduction"/>
    <property type="evidence" value="ECO:0007669"/>
    <property type="project" value="InterPro"/>
</dbReference>
<dbReference type="FunFam" id="1.20.5.1180:FF:000002">
    <property type="entry name" value="Centrosomal protein of 55 kDa"/>
    <property type="match status" value="1"/>
</dbReference>
<dbReference type="FunFam" id="1.20.5.990:FF:000006">
    <property type="entry name" value="Centrosomal protein of 55 kDa"/>
    <property type="match status" value="1"/>
</dbReference>
<dbReference type="Gene3D" id="1.20.5.1180">
    <property type="entry name" value="Geminin coiled-coil domain"/>
    <property type="match status" value="1"/>
</dbReference>
<dbReference type="Gene3D" id="1.20.5.990">
    <property type="entry name" value="Nemo cc2-lz domain - 1d5 darpin complex"/>
    <property type="match status" value="1"/>
</dbReference>
<dbReference type="InterPro" id="IPR038926">
    <property type="entry name" value="CEP55"/>
</dbReference>
<dbReference type="InterPro" id="IPR022008">
    <property type="entry name" value="EABR"/>
</dbReference>
<dbReference type="PANTHER" id="PTHR31838">
    <property type="entry name" value="CENTROSOMAL PROTEIN OF 55 KDA"/>
    <property type="match status" value="1"/>
</dbReference>
<dbReference type="PANTHER" id="PTHR31838:SF1">
    <property type="entry name" value="CENTROSOMAL PROTEIN OF 55 KDA"/>
    <property type="match status" value="1"/>
</dbReference>
<dbReference type="Pfam" id="PF12180">
    <property type="entry name" value="EABR"/>
    <property type="match status" value="1"/>
</dbReference>
<feature type="chain" id="PRO_0000238666" description="Centrosomal protein of 55 kDa">
    <location>
        <begin position="1"/>
        <end position="462"/>
    </location>
</feature>
<feature type="region of interest" description="Disordered" evidence="5">
    <location>
        <begin position="1"/>
        <end position="25"/>
    </location>
</feature>
<feature type="region of interest" description="Interaction with TSG101" evidence="1">
    <location>
        <begin position="157"/>
        <end position="235"/>
    </location>
</feature>
<feature type="region of interest" description="Interaction with PDCD6IP" evidence="1">
    <location>
        <begin position="160"/>
        <end position="214"/>
    </location>
</feature>
<feature type="region of interest" description="Required for localization to the interphase centrosome and to the midbody during cytokinesis" evidence="1">
    <location>
        <begin position="354"/>
        <end position="462"/>
    </location>
</feature>
<feature type="coiled-coil region" evidence="4">
    <location>
        <begin position="50"/>
        <end position="185"/>
    </location>
</feature>
<feature type="coiled-coil region" evidence="4">
    <location>
        <begin position="228"/>
        <end position="400"/>
    </location>
</feature>
<feature type="compositionally biased region" description="Basic and acidic residues" evidence="5">
    <location>
        <begin position="1"/>
        <end position="11"/>
    </location>
</feature>
<feature type="compositionally biased region" description="Low complexity" evidence="5">
    <location>
        <begin position="12"/>
        <end position="23"/>
    </location>
</feature>
<feature type="modified residue" description="Phosphoserine" evidence="3">
    <location>
        <position position="96"/>
    </location>
</feature>
<feature type="modified residue" description="Phosphoserine" evidence="7">
    <location>
        <position position="99"/>
    </location>
</feature>
<feature type="modified residue" description="Phosphoserine" evidence="2">
    <location>
        <position position="423"/>
    </location>
</feature>
<feature type="modified residue" description="Phosphoserine" evidence="2">
    <location>
        <position position="426"/>
    </location>
</feature>
<feature type="modified residue" description="Phosphothreonine" evidence="2">
    <location>
        <position position="428"/>
    </location>
</feature>
<feature type="modified residue" description="Phosphoserine; by PLK1" evidence="2">
    <location>
        <position position="434"/>
    </location>
</feature>
<name>CEP55_RAT</name>
<proteinExistence type="evidence at protein level"/>
<gene>
    <name evidence="6" type="primary">Cep55</name>
</gene>
<evidence type="ECO:0000250" key="1"/>
<evidence type="ECO:0000250" key="2">
    <source>
        <dbReference type="UniProtKB" id="Q53EZ4"/>
    </source>
</evidence>
<evidence type="ECO:0000250" key="3">
    <source>
        <dbReference type="UniProtKB" id="Q8BT07"/>
    </source>
</evidence>
<evidence type="ECO:0000255" key="4"/>
<evidence type="ECO:0000256" key="5">
    <source>
        <dbReference type="SAM" id="MobiDB-lite"/>
    </source>
</evidence>
<evidence type="ECO:0000312" key="6">
    <source>
        <dbReference type="RGD" id="1305340"/>
    </source>
</evidence>
<evidence type="ECO:0007744" key="7">
    <source>
    </source>
</evidence>